<proteinExistence type="inferred from homology"/>
<keyword id="KW-0067">ATP-binding</keyword>
<keyword id="KW-0963">Cytoplasm</keyword>
<keyword id="KW-0418">Kinase</keyword>
<keyword id="KW-0460">Magnesium</keyword>
<keyword id="KW-0479">Metal-binding</keyword>
<keyword id="KW-0546">Nucleotide metabolism</keyword>
<keyword id="KW-0547">Nucleotide-binding</keyword>
<keyword id="KW-0597">Phosphoprotein</keyword>
<keyword id="KW-1185">Reference proteome</keyword>
<keyword id="KW-0808">Transferase</keyword>
<accession>P65534</accession>
<accession>Q8XFN4</accession>
<reference key="1">
    <citation type="journal article" date="2001" name="Nature">
        <title>Complete genome sequence of Salmonella enterica serovar Typhimurium LT2.</title>
        <authorList>
            <person name="McClelland M."/>
            <person name="Sanderson K.E."/>
            <person name="Spieth J."/>
            <person name="Clifton S.W."/>
            <person name="Latreille P."/>
            <person name="Courtney L."/>
            <person name="Porwollik S."/>
            <person name="Ali J."/>
            <person name="Dante M."/>
            <person name="Du F."/>
            <person name="Hou S."/>
            <person name="Layman D."/>
            <person name="Leonard S."/>
            <person name="Nguyen C."/>
            <person name="Scott K."/>
            <person name="Holmes A."/>
            <person name="Grewal N."/>
            <person name="Mulvaney E."/>
            <person name="Ryan E."/>
            <person name="Sun H."/>
            <person name="Florea L."/>
            <person name="Miller W."/>
            <person name="Stoneking T."/>
            <person name="Nhan M."/>
            <person name="Waterston R."/>
            <person name="Wilson R.K."/>
        </authorList>
    </citation>
    <scope>NUCLEOTIDE SEQUENCE [LARGE SCALE GENOMIC DNA]</scope>
    <source>
        <strain>LT2 / SGSC1412 / ATCC 700720</strain>
    </source>
</reference>
<dbReference type="EC" id="2.7.4.6" evidence="2"/>
<dbReference type="EMBL" id="AE006468">
    <property type="protein sequence ID" value="AAL21420.1"/>
    <property type="molecule type" value="Genomic_DNA"/>
</dbReference>
<dbReference type="RefSeq" id="NP_461461.1">
    <property type="nucleotide sequence ID" value="NC_003197.2"/>
</dbReference>
<dbReference type="RefSeq" id="WP_000963846.1">
    <property type="nucleotide sequence ID" value="NC_003197.2"/>
</dbReference>
<dbReference type="SMR" id="P65534"/>
<dbReference type="STRING" id="99287.STM2526"/>
<dbReference type="PaxDb" id="99287-STM2526"/>
<dbReference type="GeneID" id="1254048"/>
<dbReference type="KEGG" id="stm:STM2526"/>
<dbReference type="PATRIC" id="fig|99287.12.peg.2663"/>
<dbReference type="HOGENOM" id="CLU_060216_8_1_6"/>
<dbReference type="OMA" id="QHYGEHK"/>
<dbReference type="PhylomeDB" id="P65534"/>
<dbReference type="BioCyc" id="SENT99287:STM2526-MONOMER"/>
<dbReference type="Proteomes" id="UP000001014">
    <property type="component" value="Chromosome"/>
</dbReference>
<dbReference type="GO" id="GO:0005737">
    <property type="term" value="C:cytoplasm"/>
    <property type="evidence" value="ECO:0007669"/>
    <property type="project" value="UniProtKB-SubCell"/>
</dbReference>
<dbReference type="GO" id="GO:0005524">
    <property type="term" value="F:ATP binding"/>
    <property type="evidence" value="ECO:0007669"/>
    <property type="project" value="UniProtKB-UniRule"/>
</dbReference>
<dbReference type="GO" id="GO:0046872">
    <property type="term" value="F:metal ion binding"/>
    <property type="evidence" value="ECO:0007669"/>
    <property type="project" value="UniProtKB-KW"/>
</dbReference>
<dbReference type="GO" id="GO:0004550">
    <property type="term" value="F:nucleoside diphosphate kinase activity"/>
    <property type="evidence" value="ECO:0007669"/>
    <property type="project" value="UniProtKB-UniRule"/>
</dbReference>
<dbReference type="GO" id="GO:0006241">
    <property type="term" value="P:CTP biosynthetic process"/>
    <property type="evidence" value="ECO:0007669"/>
    <property type="project" value="UniProtKB-UniRule"/>
</dbReference>
<dbReference type="GO" id="GO:0006183">
    <property type="term" value="P:GTP biosynthetic process"/>
    <property type="evidence" value="ECO:0007669"/>
    <property type="project" value="UniProtKB-UniRule"/>
</dbReference>
<dbReference type="GO" id="GO:0006163">
    <property type="term" value="P:purine nucleotide metabolic process"/>
    <property type="evidence" value="ECO:0000318"/>
    <property type="project" value="GO_Central"/>
</dbReference>
<dbReference type="GO" id="GO:0006220">
    <property type="term" value="P:pyrimidine nucleotide metabolic process"/>
    <property type="evidence" value="ECO:0000318"/>
    <property type="project" value="GO_Central"/>
</dbReference>
<dbReference type="GO" id="GO:0006228">
    <property type="term" value="P:UTP biosynthetic process"/>
    <property type="evidence" value="ECO:0007669"/>
    <property type="project" value="UniProtKB-UniRule"/>
</dbReference>
<dbReference type="CDD" id="cd04413">
    <property type="entry name" value="NDPk_I"/>
    <property type="match status" value="1"/>
</dbReference>
<dbReference type="FunFam" id="3.30.70.141:FF:000001">
    <property type="entry name" value="Nucleoside diphosphate kinase"/>
    <property type="match status" value="1"/>
</dbReference>
<dbReference type="Gene3D" id="3.30.70.141">
    <property type="entry name" value="Nucleoside diphosphate kinase-like domain"/>
    <property type="match status" value="1"/>
</dbReference>
<dbReference type="HAMAP" id="MF_00451">
    <property type="entry name" value="NDP_kinase"/>
    <property type="match status" value="1"/>
</dbReference>
<dbReference type="InterPro" id="IPR034907">
    <property type="entry name" value="NDK-like_dom"/>
</dbReference>
<dbReference type="InterPro" id="IPR036850">
    <property type="entry name" value="NDK-like_dom_sf"/>
</dbReference>
<dbReference type="InterPro" id="IPR001564">
    <property type="entry name" value="Nucleoside_diP_kinase"/>
</dbReference>
<dbReference type="InterPro" id="IPR023005">
    <property type="entry name" value="Nucleoside_diP_kinase_AS"/>
</dbReference>
<dbReference type="NCBIfam" id="NF001908">
    <property type="entry name" value="PRK00668.1"/>
    <property type="match status" value="1"/>
</dbReference>
<dbReference type="PANTHER" id="PTHR46161">
    <property type="entry name" value="NUCLEOSIDE DIPHOSPHATE KINASE"/>
    <property type="match status" value="1"/>
</dbReference>
<dbReference type="PANTHER" id="PTHR46161:SF3">
    <property type="entry name" value="NUCLEOSIDE DIPHOSPHATE KINASE DDB_G0292928-RELATED"/>
    <property type="match status" value="1"/>
</dbReference>
<dbReference type="Pfam" id="PF00334">
    <property type="entry name" value="NDK"/>
    <property type="match status" value="1"/>
</dbReference>
<dbReference type="PRINTS" id="PR01243">
    <property type="entry name" value="NUCDPKINASE"/>
</dbReference>
<dbReference type="SMART" id="SM00562">
    <property type="entry name" value="NDK"/>
    <property type="match status" value="1"/>
</dbReference>
<dbReference type="SUPFAM" id="SSF54919">
    <property type="entry name" value="Nucleoside diphosphate kinase, NDK"/>
    <property type="match status" value="1"/>
</dbReference>
<dbReference type="PROSITE" id="PS00469">
    <property type="entry name" value="NDPK"/>
    <property type="match status" value="1"/>
</dbReference>
<dbReference type="PROSITE" id="PS51374">
    <property type="entry name" value="NDPK_LIKE"/>
    <property type="match status" value="1"/>
</dbReference>
<feature type="initiator methionine" description="Removed" evidence="1">
    <location>
        <position position="1"/>
    </location>
</feature>
<feature type="chain" id="PRO_0000137039" description="Nucleoside diphosphate kinase">
    <location>
        <begin position="2"/>
        <end position="143"/>
    </location>
</feature>
<feature type="active site" description="Pros-phosphohistidine intermediate" evidence="2">
    <location>
        <position position="117"/>
    </location>
</feature>
<feature type="binding site" evidence="2">
    <location>
        <position position="11"/>
    </location>
    <ligand>
        <name>ATP</name>
        <dbReference type="ChEBI" id="CHEBI:30616"/>
    </ligand>
</feature>
<feature type="binding site" evidence="2">
    <location>
        <position position="59"/>
    </location>
    <ligand>
        <name>ATP</name>
        <dbReference type="ChEBI" id="CHEBI:30616"/>
    </ligand>
</feature>
<feature type="binding site" evidence="2">
    <location>
        <position position="87"/>
    </location>
    <ligand>
        <name>ATP</name>
        <dbReference type="ChEBI" id="CHEBI:30616"/>
    </ligand>
</feature>
<feature type="binding site" evidence="2">
    <location>
        <position position="93"/>
    </location>
    <ligand>
        <name>ATP</name>
        <dbReference type="ChEBI" id="CHEBI:30616"/>
    </ligand>
</feature>
<feature type="binding site" evidence="2">
    <location>
        <position position="104"/>
    </location>
    <ligand>
        <name>ATP</name>
        <dbReference type="ChEBI" id="CHEBI:30616"/>
    </ligand>
</feature>
<feature type="binding site" evidence="2">
    <location>
        <position position="114"/>
    </location>
    <ligand>
        <name>ATP</name>
        <dbReference type="ChEBI" id="CHEBI:30616"/>
    </ligand>
</feature>
<name>NDK_SALTY</name>
<comment type="function">
    <text evidence="2">Major role in the synthesis of nucleoside triphosphates other than ATP. The ATP gamma phosphate is transferred to the NDP beta phosphate via a ping-pong mechanism, using a phosphorylated active-site intermediate.</text>
</comment>
<comment type="catalytic activity">
    <reaction evidence="2">
        <text>a 2'-deoxyribonucleoside 5'-diphosphate + ATP = a 2'-deoxyribonucleoside 5'-triphosphate + ADP</text>
        <dbReference type="Rhea" id="RHEA:44640"/>
        <dbReference type="ChEBI" id="CHEBI:30616"/>
        <dbReference type="ChEBI" id="CHEBI:61560"/>
        <dbReference type="ChEBI" id="CHEBI:73316"/>
        <dbReference type="ChEBI" id="CHEBI:456216"/>
        <dbReference type="EC" id="2.7.4.6"/>
    </reaction>
</comment>
<comment type="catalytic activity">
    <reaction evidence="2">
        <text>a ribonucleoside 5'-diphosphate + ATP = a ribonucleoside 5'-triphosphate + ADP</text>
        <dbReference type="Rhea" id="RHEA:18113"/>
        <dbReference type="ChEBI" id="CHEBI:30616"/>
        <dbReference type="ChEBI" id="CHEBI:57930"/>
        <dbReference type="ChEBI" id="CHEBI:61557"/>
        <dbReference type="ChEBI" id="CHEBI:456216"/>
        <dbReference type="EC" id="2.7.4.6"/>
    </reaction>
</comment>
<comment type="cofactor">
    <cofactor evidence="2">
        <name>Mg(2+)</name>
        <dbReference type="ChEBI" id="CHEBI:18420"/>
    </cofactor>
</comment>
<comment type="subunit">
    <text evidence="2">Homotetramer.</text>
</comment>
<comment type="subcellular location">
    <subcellularLocation>
        <location evidence="2">Cytoplasm</location>
    </subcellularLocation>
</comment>
<comment type="similarity">
    <text evidence="2">Belongs to the NDK family.</text>
</comment>
<evidence type="ECO:0000250" key="1"/>
<evidence type="ECO:0000255" key="2">
    <source>
        <dbReference type="HAMAP-Rule" id="MF_00451"/>
    </source>
</evidence>
<organism>
    <name type="scientific">Salmonella typhimurium (strain LT2 / SGSC1412 / ATCC 700720)</name>
    <dbReference type="NCBI Taxonomy" id="99287"/>
    <lineage>
        <taxon>Bacteria</taxon>
        <taxon>Pseudomonadati</taxon>
        <taxon>Pseudomonadota</taxon>
        <taxon>Gammaproteobacteria</taxon>
        <taxon>Enterobacterales</taxon>
        <taxon>Enterobacteriaceae</taxon>
        <taxon>Salmonella</taxon>
    </lineage>
</organism>
<gene>
    <name evidence="2" type="primary">ndk</name>
    <name type="ordered locus">STM2526</name>
</gene>
<protein>
    <recommendedName>
        <fullName evidence="2">Nucleoside diphosphate kinase</fullName>
        <shortName evidence="2">NDK</shortName>
        <shortName evidence="2">NDP kinase</shortName>
        <ecNumber evidence="2">2.7.4.6</ecNumber>
    </recommendedName>
    <alternativeName>
        <fullName evidence="2">Nucleoside-2-P kinase</fullName>
    </alternativeName>
</protein>
<sequence>MAIERTFSIIKPNAVAKNVIGSIFARFEAAGFKIVGTKMLHLTVEQARGFYAEHDGKPFFDGLVEFMTSGPIVVSVLESENAVQRHRDLLGATNPANALAGTLRADYADSLTENGTHGSDSLESAQREIAFFFGEGEVCPRTR</sequence>